<gene>
    <name type="ordered locus">TM_0253</name>
</gene>
<reference key="1">
    <citation type="journal article" date="1999" name="Nature">
        <title>Evidence for lateral gene transfer between Archaea and Bacteria from genome sequence of Thermotoga maritima.</title>
        <authorList>
            <person name="Nelson K.E."/>
            <person name="Clayton R.A."/>
            <person name="Gill S.R."/>
            <person name="Gwinn M.L."/>
            <person name="Dodson R.J."/>
            <person name="Haft D.H."/>
            <person name="Hickey E.K."/>
            <person name="Peterson J.D."/>
            <person name="Nelson W.C."/>
            <person name="Ketchum K.A."/>
            <person name="McDonald L.A."/>
            <person name="Utterback T.R."/>
            <person name="Malek J.A."/>
            <person name="Linher K.D."/>
            <person name="Garrett M.M."/>
            <person name="Stewart A.M."/>
            <person name="Cotton M.D."/>
            <person name="Pratt M.S."/>
            <person name="Phillips C.A."/>
            <person name="Richardson D.L."/>
            <person name="Heidelberg J.F."/>
            <person name="Sutton G.G."/>
            <person name="Fleischmann R.D."/>
            <person name="Eisen J.A."/>
            <person name="White O."/>
            <person name="Salzberg S.L."/>
            <person name="Smith H.O."/>
            <person name="Venter J.C."/>
            <person name="Fraser C.M."/>
        </authorList>
    </citation>
    <scope>NUCLEOTIDE SEQUENCE [LARGE SCALE GENOMIC DNA]</scope>
    <source>
        <strain>ATCC 43589 / DSM 3109 / JCM 10099 / NBRC 100826 / MSB8</strain>
    </source>
</reference>
<evidence type="ECO:0000305" key="1"/>
<comment type="similarity">
    <text evidence="1">Belongs to the UPF0102 family.</text>
</comment>
<sequence length="108" mass="12650">MMDWKEAEELACKFLKKKGYKILERNYRTKYGEIDIVARDGREIVFVEVKSGSGKVDPLERIDLKKVRNLEQTARFYMIQNKLKGPARVDFVRVTPEGIDHFEGIWLG</sequence>
<name>Y253_THEMA</name>
<dbReference type="EMBL" id="AE000512">
    <property type="protein sequence ID" value="AAD35343.1"/>
    <property type="molecule type" value="Genomic_DNA"/>
</dbReference>
<dbReference type="PIR" id="F72399">
    <property type="entry name" value="F72399"/>
</dbReference>
<dbReference type="RefSeq" id="NP_228067.1">
    <property type="nucleotide sequence ID" value="NC_000853.1"/>
</dbReference>
<dbReference type="RefSeq" id="WP_004082957.1">
    <property type="nucleotide sequence ID" value="NZ_CP011107.1"/>
</dbReference>
<dbReference type="SMR" id="Q9WY95"/>
<dbReference type="STRING" id="243274.TM_0253"/>
<dbReference type="PaxDb" id="243274-THEMA_03460"/>
<dbReference type="EnsemblBacteria" id="AAD35343">
    <property type="protein sequence ID" value="AAD35343"/>
    <property type="gene ID" value="TM_0253"/>
</dbReference>
<dbReference type="KEGG" id="tma:TM0253"/>
<dbReference type="KEGG" id="tmi:THEMA_03460"/>
<dbReference type="KEGG" id="tmw:THMA_0260"/>
<dbReference type="PATRIC" id="fig|243274.18.peg.676"/>
<dbReference type="eggNOG" id="COG0792">
    <property type="taxonomic scope" value="Bacteria"/>
</dbReference>
<dbReference type="InParanoid" id="Q9WY95"/>
<dbReference type="OrthoDB" id="9802516at2"/>
<dbReference type="Proteomes" id="UP000008183">
    <property type="component" value="Chromosome"/>
</dbReference>
<dbReference type="GO" id="GO:0003676">
    <property type="term" value="F:nucleic acid binding"/>
    <property type="evidence" value="ECO:0007669"/>
    <property type="project" value="InterPro"/>
</dbReference>
<dbReference type="CDD" id="cd20736">
    <property type="entry name" value="PoNe_Nuclease"/>
    <property type="match status" value="1"/>
</dbReference>
<dbReference type="Gene3D" id="3.40.1350.10">
    <property type="match status" value="1"/>
</dbReference>
<dbReference type="HAMAP" id="MF_00048">
    <property type="entry name" value="UPF0102"/>
    <property type="match status" value="1"/>
</dbReference>
<dbReference type="InterPro" id="IPR011335">
    <property type="entry name" value="Restrct_endonuc-II-like"/>
</dbReference>
<dbReference type="InterPro" id="IPR011856">
    <property type="entry name" value="tRNA_endonuc-like_dom_sf"/>
</dbReference>
<dbReference type="InterPro" id="IPR003509">
    <property type="entry name" value="UPF0102_YraN-like"/>
</dbReference>
<dbReference type="NCBIfam" id="NF011270">
    <property type="entry name" value="PRK14677.1"/>
    <property type="match status" value="1"/>
</dbReference>
<dbReference type="PANTHER" id="PTHR34039">
    <property type="entry name" value="UPF0102 PROTEIN YRAN"/>
    <property type="match status" value="1"/>
</dbReference>
<dbReference type="PANTHER" id="PTHR34039:SF1">
    <property type="entry name" value="UPF0102 PROTEIN YRAN"/>
    <property type="match status" value="1"/>
</dbReference>
<dbReference type="Pfam" id="PF02021">
    <property type="entry name" value="UPF0102"/>
    <property type="match status" value="1"/>
</dbReference>
<dbReference type="SUPFAM" id="SSF52980">
    <property type="entry name" value="Restriction endonuclease-like"/>
    <property type="match status" value="1"/>
</dbReference>
<accession>Q9WY95</accession>
<protein>
    <recommendedName>
        <fullName>UPF0102 protein TM_0253</fullName>
    </recommendedName>
</protein>
<proteinExistence type="inferred from homology"/>
<feature type="chain" id="PRO_0000167383" description="UPF0102 protein TM_0253">
    <location>
        <begin position="1"/>
        <end position="108"/>
    </location>
</feature>
<keyword id="KW-1185">Reference proteome</keyword>
<organism>
    <name type="scientific">Thermotoga maritima (strain ATCC 43589 / DSM 3109 / JCM 10099 / NBRC 100826 / MSB8)</name>
    <dbReference type="NCBI Taxonomy" id="243274"/>
    <lineage>
        <taxon>Bacteria</taxon>
        <taxon>Thermotogati</taxon>
        <taxon>Thermotogota</taxon>
        <taxon>Thermotogae</taxon>
        <taxon>Thermotogales</taxon>
        <taxon>Thermotogaceae</taxon>
        <taxon>Thermotoga</taxon>
    </lineage>
</organism>